<name>GPGS_MYCTO</name>
<dbReference type="EC" id="2.4.1.266" evidence="1"/>
<dbReference type="EMBL" id="AE000516">
    <property type="protein sequence ID" value="AAK45503.1"/>
    <property type="molecule type" value="Genomic_DNA"/>
</dbReference>
<dbReference type="PIR" id="F70609">
    <property type="entry name" value="F70609"/>
</dbReference>
<dbReference type="RefSeq" id="WP_003406242.1">
    <property type="nucleotide sequence ID" value="NZ_KK341227.1"/>
</dbReference>
<dbReference type="SMR" id="P9WMW8"/>
<dbReference type="CAZy" id="GT81">
    <property type="family name" value="Glycosyltransferase Family 81"/>
</dbReference>
<dbReference type="KEGG" id="mtc:MT1246"/>
<dbReference type="PATRIC" id="fig|83331.31.peg.1347"/>
<dbReference type="HOGENOM" id="CLU_053119_0_0_11"/>
<dbReference type="Proteomes" id="UP000001020">
    <property type="component" value="Chromosome"/>
</dbReference>
<dbReference type="GO" id="GO:0016757">
    <property type="term" value="F:glycosyltransferase activity"/>
    <property type="evidence" value="ECO:0007669"/>
    <property type="project" value="UniProtKB-KW"/>
</dbReference>
<dbReference type="GO" id="GO:0046872">
    <property type="term" value="F:metal ion binding"/>
    <property type="evidence" value="ECO:0007669"/>
    <property type="project" value="UniProtKB-KW"/>
</dbReference>
<dbReference type="FunFam" id="3.90.550.10:FF:000242">
    <property type="entry name" value="Glucosyl-3-phosphoglycerate synthase"/>
    <property type="match status" value="1"/>
</dbReference>
<dbReference type="Gene3D" id="3.90.550.10">
    <property type="entry name" value="Spore Coat Polysaccharide Biosynthesis Protein SpsA, Chain A"/>
    <property type="match status" value="1"/>
</dbReference>
<dbReference type="InterPro" id="IPR001173">
    <property type="entry name" value="Glyco_trans_2-like"/>
</dbReference>
<dbReference type="InterPro" id="IPR050256">
    <property type="entry name" value="Glycosyltransferase_2"/>
</dbReference>
<dbReference type="InterPro" id="IPR029044">
    <property type="entry name" value="Nucleotide-diphossugar_trans"/>
</dbReference>
<dbReference type="NCBIfam" id="NF010496">
    <property type="entry name" value="PRK13915.1"/>
    <property type="match status" value="1"/>
</dbReference>
<dbReference type="PANTHER" id="PTHR48090:SF10">
    <property type="entry name" value="GLUCOSYL-3-PHOSPHOGLYCERATE SYNTHASE"/>
    <property type="match status" value="1"/>
</dbReference>
<dbReference type="PANTHER" id="PTHR48090">
    <property type="entry name" value="UNDECAPRENYL-PHOSPHATE 4-DEOXY-4-FORMAMIDO-L-ARABINOSE TRANSFERASE-RELATED"/>
    <property type="match status" value="1"/>
</dbReference>
<dbReference type="Pfam" id="PF00535">
    <property type="entry name" value="Glycos_transf_2"/>
    <property type="match status" value="1"/>
</dbReference>
<dbReference type="SUPFAM" id="SSF53448">
    <property type="entry name" value="Nucleotide-diphospho-sugar transferases"/>
    <property type="match status" value="1"/>
</dbReference>
<comment type="function">
    <text evidence="1">Involved in the biosynthesis of 6-O-methylglucose lipopolysaccarides (MGLPs). Catalyzes the transfer of the glucose moiety from UDP-alpha-D-glucose (UDP-Glc) to the position 2 of 3-phospho-D-glycerate (3-PGA) to form glucosyl-3-phosphoglycerate (GPG).</text>
</comment>
<comment type="catalytic activity">
    <reaction evidence="1">
        <text>an NDP-alpha-D-glucose + (2R)-3-phosphoglycerate = (2R)-2-O-(alpha-D-glucopyranosyl)-3-phospho-glycerate + a ribonucleoside 5'-diphosphate + H(+)</text>
        <dbReference type="Rhea" id="RHEA:47244"/>
        <dbReference type="ChEBI" id="CHEBI:15378"/>
        <dbReference type="ChEBI" id="CHEBI:57930"/>
        <dbReference type="ChEBI" id="CHEBI:58272"/>
        <dbReference type="ChEBI" id="CHEBI:62600"/>
        <dbReference type="ChEBI" id="CHEBI:76533"/>
        <dbReference type="EC" id="2.4.1.266"/>
    </reaction>
    <physiologicalReaction direction="left-to-right" evidence="1">
        <dbReference type="Rhea" id="RHEA:47245"/>
    </physiologicalReaction>
</comment>
<comment type="catalytic activity">
    <reaction evidence="1">
        <text>(2R)-3-phosphoglycerate + UDP-alpha-D-glucose = (2R)-2-O-(alpha-D-glucopyranosyl)-3-phospho-glycerate + UDP + H(+)</text>
        <dbReference type="Rhea" id="RHEA:31319"/>
        <dbReference type="ChEBI" id="CHEBI:15378"/>
        <dbReference type="ChEBI" id="CHEBI:58223"/>
        <dbReference type="ChEBI" id="CHEBI:58272"/>
        <dbReference type="ChEBI" id="CHEBI:58885"/>
        <dbReference type="ChEBI" id="CHEBI:62600"/>
        <dbReference type="EC" id="2.4.1.266"/>
    </reaction>
    <physiologicalReaction direction="left-to-right" evidence="1">
        <dbReference type="Rhea" id="RHEA:31320"/>
    </physiologicalReaction>
</comment>
<comment type="cofactor">
    <cofactor evidence="1">
        <name>Mg(2+)</name>
        <dbReference type="ChEBI" id="CHEBI:18420"/>
    </cofactor>
    <cofactor evidence="1">
        <name>Mn(2+)</name>
        <dbReference type="ChEBI" id="CHEBI:29035"/>
    </cofactor>
    <text evidence="1">Requires divalent cations for activity.</text>
</comment>
<comment type="subunit">
    <text evidence="1">Homodimer.</text>
</comment>
<comment type="similarity">
    <text evidence="1">Belongs to the glycosyltransferase 2 family.</text>
</comment>
<proteinExistence type="inferred from homology"/>
<reference key="1">
    <citation type="journal article" date="2002" name="J. Bacteriol.">
        <title>Whole-genome comparison of Mycobacterium tuberculosis clinical and laboratory strains.</title>
        <authorList>
            <person name="Fleischmann R.D."/>
            <person name="Alland D."/>
            <person name="Eisen J.A."/>
            <person name="Carpenter L."/>
            <person name="White O."/>
            <person name="Peterson J.D."/>
            <person name="DeBoy R.T."/>
            <person name="Dodson R.J."/>
            <person name="Gwinn M.L."/>
            <person name="Haft D.H."/>
            <person name="Hickey E.K."/>
            <person name="Kolonay J.F."/>
            <person name="Nelson W.C."/>
            <person name="Umayam L.A."/>
            <person name="Ermolaeva M.D."/>
            <person name="Salzberg S.L."/>
            <person name="Delcher A."/>
            <person name="Utterback T.R."/>
            <person name="Weidman J.F."/>
            <person name="Khouri H.M."/>
            <person name="Gill J."/>
            <person name="Mikula A."/>
            <person name="Bishai W."/>
            <person name="Jacobs W.R. Jr."/>
            <person name="Venter J.C."/>
            <person name="Fraser C.M."/>
        </authorList>
    </citation>
    <scope>NUCLEOTIDE SEQUENCE [LARGE SCALE GENOMIC DNA]</scope>
    <source>
        <strain>CDC 1551 / Oshkosh</strain>
    </source>
</reference>
<organism>
    <name type="scientific">Mycobacterium tuberculosis (strain CDC 1551 / Oshkosh)</name>
    <dbReference type="NCBI Taxonomy" id="83331"/>
    <lineage>
        <taxon>Bacteria</taxon>
        <taxon>Bacillati</taxon>
        <taxon>Actinomycetota</taxon>
        <taxon>Actinomycetes</taxon>
        <taxon>Mycobacteriales</taxon>
        <taxon>Mycobacteriaceae</taxon>
        <taxon>Mycobacterium</taxon>
        <taxon>Mycobacterium tuberculosis complex</taxon>
    </lineage>
</organism>
<feature type="chain" id="PRO_0000427229" description="Glucosyl-3-phosphoglycerate synthase">
    <location>
        <begin position="1"/>
        <end position="324"/>
    </location>
</feature>
<feature type="binding site" evidence="1">
    <location>
        <begin position="50"/>
        <end position="54"/>
    </location>
    <ligand>
        <name>UDP-alpha-D-glucose</name>
        <dbReference type="ChEBI" id="CHEBI:58885"/>
    </ligand>
</feature>
<feature type="binding site" evidence="1">
    <location>
        <position position="81"/>
    </location>
    <ligand>
        <name>UDP-alpha-D-glucose</name>
        <dbReference type="ChEBI" id="CHEBI:58885"/>
    </ligand>
</feature>
<feature type="binding site" evidence="1">
    <location>
        <position position="114"/>
    </location>
    <ligand>
        <name>UDP-alpha-D-glucose</name>
        <dbReference type="ChEBI" id="CHEBI:58885"/>
    </ligand>
</feature>
<feature type="binding site" evidence="1">
    <location>
        <begin position="134"/>
        <end position="135"/>
    </location>
    <ligand>
        <name>UDP-alpha-D-glucose</name>
        <dbReference type="ChEBI" id="CHEBI:58885"/>
    </ligand>
</feature>
<feature type="binding site" evidence="1">
    <location>
        <position position="136"/>
    </location>
    <ligand>
        <name>Mn(2+)</name>
        <dbReference type="ChEBI" id="CHEBI:29035"/>
    </ligand>
</feature>
<feature type="binding site" evidence="1">
    <location>
        <begin position="184"/>
        <end position="187"/>
    </location>
    <ligand>
        <name>(2R)-3-phosphoglycerate</name>
        <dbReference type="ChEBI" id="CHEBI:58272"/>
    </ligand>
</feature>
<feature type="binding site" evidence="1">
    <location>
        <begin position="229"/>
        <end position="232"/>
    </location>
    <ligand>
        <name>UDP-alpha-D-glucose</name>
        <dbReference type="ChEBI" id="CHEBI:58885"/>
    </ligand>
</feature>
<feature type="binding site" evidence="1">
    <location>
        <begin position="256"/>
        <end position="261"/>
    </location>
    <ligand>
        <name>UDP-alpha-D-glucose</name>
        <dbReference type="ChEBI" id="CHEBI:58885"/>
    </ligand>
</feature>
<feature type="binding site" evidence="1">
    <location>
        <position position="258"/>
    </location>
    <ligand>
        <name>Mn(2+)</name>
        <dbReference type="ChEBI" id="CHEBI:29035"/>
    </ligand>
</feature>
<feature type="binding site" evidence="1">
    <location>
        <position position="260"/>
    </location>
    <ligand>
        <name>(2R)-3-phosphoglycerate</name>
        <dbReference type="ChEBI" id="CHEBI:58272"/>
    </ligand>
</feature>
<evidence type="ECO:0000250" key="1">
    <source>
        <dbReference type="UniProtKB" id="P9WMW9"/>
    </source>
</evidence>
<keyword id="KW-0328">Glycosyltransferase</keyword>
<keyword id="KW-0460">Magnesium</keyword>
<keyword id="KW-0464">Manganese</keyword>
<keyword id="KW-0479">Metal-binding</keyword>
<keyword id="KW-1185">Reference proteome</keyword>
<keyword id="KW-0808">Transferase</keyword>
<sequence length="324" mass="34379">MTASELVAGDLAGGRAPGALPLDTTWHRPGWTIGELEAAKAGRTISVVLPALNEEATIESVIDSISPLVDGLVDELIVLDSGSTDDTEIRAIASGARVVSREQALPEVPVRPGKGEALWRSLAATSGDIVVFIDSDLINPHPLFVPWLVGPLLTGEGIQLVKSFYRRPLQVSDVTSGVCATGGGRVTELVARPLLAALRPELGCVLQPLSGEYAASRELLTSLPFAPGYGVEIGLLIDTFDRLGLDAIAQVNLGVRAHRNRPLDELGAMSRQVIATLLSRCGIPDSGVGLTQFLPGGPDDSDYTRHTWPVSLVDRPPMKVMRPR</sequence>
<protein>
    <recommendedName>
        <fullName evidence="1">Glucosyl-3-phosphoglycerate synthase</fullName>
        <shortName evidence="1">GpgS</shortName>
        <ecNumber evidence="1">2.4.1.266</ecNumber>
    </recommendedName>
</protein>
<accession>P9WMW8</accession>
<accession>F2GFY0</accession>
<accession>L0T8Q4</accession>
<accession>O05309</accession>
<accession>Q7D8M0</accession>
<gene>
    <name type="primary">gpgS</name>
    <name type="ordered locus">MT1246</name>
</gene>